<evidence type="ECO:0000255" key="1">
    <source>
        <dbReference type="HAMAP-Rule" id="MF_00248"/>
    </source>
</evidence>
<sequence length="181" mass="19487">MELKGTTILAVRGAQGVTIAGDGQVTMGQSIVMKHSARKVRRLYNGRVVAGFAGSTADAFTLFEHFEAKLEEHRGNLVRAAVEMAKSWRKDKYLRRLEAMLLVADNEHILVLSGNGDVIEPDDGIAAIGSGGPYALAAARALARHTQLDAETIAREAMRIAGEICVFTNDHLTVESAETQA</sequence>
<comment type="function">
    <text evidence="1">Protease subunit of a proteasome-like degradation complex believed to be a general protein degrading machinery.</text>
</comment>
<comment type="catalytic activity">
    <reaction evidence="1">
        <text>ATP-dependent cleavage of peptide bonds with broad specificity.</text>
        <dbReference type="EC" id="3.4.25.2"/>
    </reaction>
</comment>
<comment type="activity regulation">
    <text evidence="1">Allosterically activated by HslU binding.</text>
</comment>
<comment type="subunit">
    <text evidence="1">A double ring-shaped homohexamer of HslV is capped on each side by a ring-shaped HslU homohexamer. The assembly of the HslU/HslV complex is dependent on binding of ATP.</text>
</comment>
<comment type="subcellular location">
    <subcellularLocation>
        <location evidence="1">Cytoplasm</location>
    </subcellularLocation>
</comment>
<comment type="similarity">
    <text evidence="1">Belongs to the peptidase T1B family. HslV subfamily.</text>
</comment>
<protein>
    <recommendedName>
        <fullName evidence="1">ATP-dependent protease subunit HslV</fullName>
        <ecNumber evidence="1">3.4.25.2</ecNumber>
    </recommendedName>
</protein>
<gene>
    <name evidence="1" type="primary">hslV</name>
    <name type="ordered locus">DVU_1577</name>
</gene>
<keyword id="KW-0021">Allosteric enzyme</keyword>
<keyword id="KW-0963">Cytoplasm</keyword>
<keyword id="KW-0378">Hydrolase</keyword>
<keyword id="KW-0479">Metal-binding</keyword>
<keyword id="KW-0645">Protease</keyword>
<keyword id="KW-1185">Reference proteome</keyword>
<keyword id="KW-0915">Sodium</keyword>
<keyword id="KW-0888">Threonine protease</keyword>
<reference key="1">
    <citation type="journal article" date="2004" name="Nat. Biotechnol.">
        <title>The genome sequence of the anaerobic, sulfate-reducing bacterium Desulfovibrio vulgaris Hildenborough.</title>
        <authorList>
            <person name="Heidelberg J.F."/>
            <person name="Seshadri R."/>
            <person name="Haveman S.A."/>
            <person name="Hemme C.L."/>
            <person name="Paulsen I.T."/>
            <person name="Kolonay J.F."/>
            <person name="Eisen J.A."/>
            <person name="Ward N.L."/>
            <person name="Methe B.A."/>
            <person name="Brinkac L.M."/>
            <person name="Daugherty S.C."/>
            <person name="DeBoy R.T."/>
            <person name="Dodson R.J."/>
            <person name="Durkin A.S."/>
            <person name="Madupu R."/>
            <person name="Nelson W.C."/>
            <person name="Sullivan S.A."/>
            <person name="Fouts D.E."/>
            <person name="Haft D.H."/>
            <person name="Selengut J."/>
            <person name="Peterson J.D."/>
            <person name="Davidsen T.M."/>
            <person name="Zafar N."/>
            <person name="Zhou L."/>
            <person name="Radune D."/>
            <person name="Dimitrov G."/>
            <person name="Hance M."/>
            <person name="Tran K."/>
            <person name="Khouri H.M."/>
            <person name="Gill J."/>
            <person name="Utterback T.R."/>
            <person name="Feldblyum T.V."/>
            <person name="Wall J.D."/>
            <person name="Voordouw G."/>
            <person name="Fraser C.M."/>
        </authorList>
    </citation>
    <scope>NUCLEOTIDE SEQUENCE [LARGE SCALE GENOMIC DNA]</scope>
    <source>
        <strain>ATCC 29579 / DSM 644 / CCUG 34227 / NCIMB 8303 / VKM B-1760 / Hildenborough</strain>
    </source>
</reference>
<feature type="chain" id="PRO_0000148104" description="ATP-dependent protease subunit HslV">
    <location>
        <begin position="1"/>
        <end position="181"/>
    </location>
</feature>
<feature type="active site" evidence="1">
    <location>
        <position position="6"/>
    </location>
</feature>
<feature type="binding site" evidence="1">
    <location>
        <position position="162"/>
    </location>
    <ligand>
        <name>Na(+)</name>
        <dbReference type="ChEBI" id="CHEBI:29101"/>
    </ligand>
</feature>
<feature type="binding site" evidence="1">
    <location>
        <position position="165"/>
    </location>
    <ligand>
        <name>Na(+)</name>
        <dbReference type="ChEBI" id="CHEBI:29101"/>
    </ligand>
</feature>
<feature type="binding site" evidence="1">
    <location>
        <position position="168"/>
    </location>
    <ligand>
        <name>Na(+)</name>
        <dbReference type="ChEBI" id="CHEBI:29101"/>
    </ligand>
</feature>
<organism>
    <name type="scientific">Nitratidesulfovibrio vulgaris (strain ATCC 29579 / DSM 644 / CCUG 34227 / NCIMB 8303 / VKM B-1760 / Hildenborough)</name>
    <name type="common">Desulfovibrio vulgaris</name>
    <dbReference type="NCBI Taxonomy" id="882"/>
    <lineage>
        <taxon>Bacteria</taxon>
        <taxon>Pseudomonadati</taxon>
        <taxon>Thermodesulfobacteriota</taxon>
        <taxon>Desulfovibrionia</taxon>
        <taxon>Desulfovibrionales</taxon>
        <taxon>Desulfovibrionaceae</taxon>
        <taxon>Nitratidesulfovibrio</taxon>
    </lineage>
</organism>
<accession>Q72BQ7</accession>
<name>HSLV_NITV2</name>
<dbReference type="EC" id="3.4.25.2" evidence="1"/>
<dbReference type="EMBL" id="AE017285">
    <property type="protein sequence ID" value="AAS96055.1"/>
    <property type="molecule type" value="Genomic_DNA"/>
</dbReference>
<dbReference type="RefSeq" id="WP_010938868.1">
    <property type="nucleotide sequence ID" value="NC_002937.3"/>
</dbReference>
<dbReference type="RefSeq" id="YP_010796.1">
    <property type="nucleotide sequence ID" value="NC_002937.3"/>
</dbReference>
<dbReference type="SMR" id="Q72BQ7"/>
<dbReference type="STRING" id="882.DVU_1577"/>
<dbReference type="MEROPS" id="T01.007"/>
<dbReference type="PaxDb" id="882-DVU_1577"/>
<dbReference type="EnsemblBacteria" id="AAS96055">
    <property type="protein sequence ID" value="AAS96055"/>
    <property type="gene ID" value="DVU_1577"/>
</dbReference>
<dbReference type="KEGG" id="dvu:DVU_1577"/>
<dbReference type="PATRIC" id="fig|882.5.peg.1452"/>
<dbReference type="eggNOG" id="COG5405">
    <property type="taxonomic scope" value="Bacteria"/>
</dbReference>
<dbReference type="HOGENOM" id="CLU_093872_1_1_7"/>
<dbReference type="OrthoDB" id="9804884at2"/>
<dbReference type="PhylomeDB" id="Q72BQ7"/>
<dbReference type="Proteomes" id="UP000002194">
    <property type="component" value="Chromosome"/>
</dbReference>
<dbReference type="GO" id="GO:0009376">
    <property type="term" value="C:HslUV protease complex"/>
    <property type="evidence" value="ECO:0007669"/>
    <property type="project" value="UniProtKB-UniRule"/>
</dbReference>
<dbReference type="GO" id="GO:0005839">
    <property type="term" value="C:proteasome core complex"/>
    <property type="evidence" value="ECO:0007669"/>
    <property type="project" value="InterPro"/>
</dbReference>
<dbReference type="GO" id="GO:0046872">
    <property type="term" value="F:metal ion binding"/>
    <property type="evidence" value="ECO:0007669"/>
    <property type="project" value="UniProtKB-KW"/>
</dbReference>
<dbReference type="GO" id="GO:0004298">
    <property type="term" value="F:threonine-type endopeptidase activity"/>
    <property type="evidence" value="ECO:0007669"/>
    <property type="project" value="UniProtKB-KW"/>
</dbReference>
<dbReference type="GO" id="GO:0051603">
    <property type="term" value="P:proteolysis involved in protein catabolic process"/>
    <property type="evidence" value="ECO:0007669"/>
    <property type="project" value="InterPro"/>
</dbReference>
<dbReference type="CDD" id="cd01913">
    <property type="entry name" value="protease_HslV"/>
    <property type="match status" value="1"/>
</dbReference>
<dbReference type="FunFam" id="3.60.20.10:FF:000002">
    <property type="entry name" value="ATP-dependent protease subunit HslV"/>
    <property type="match status" value="1"/>
</dbReference>
<dbReference type="Gene3D" id="3.60.20.10">
    <property type="entry name" value="Glutamine Phosphoribosylpyrophosphate, subunit 1, domain 1"/>
    <property type="match status" value="1"/>
</dbReference>
<dbReference type="HAMAP" id="MF_00248">
    <property type="entry name" value="HslV"/>
    <property type="match status" value="1"/>
</dbReference>
<dbReference type="InterPro" id="IPR022281">
    <property type="entry name" value="ATP-dep_Prtase_HsIV_su"/>
</dbReference>
<dbReference type="InterPro" id="IPR029055">
    <property type="entry name" value="Ntn_hydrolases_N"/>
</dbReference>
<dbReference type="InterPro" id="IPR001353">
    <property type="entry name" value="Proteasome_sua/b"/>
</dbReference>
<dbReference type="InterPro" id="IPR023333">
    <property type="entry name" value="Proteasome_suB-type"/>
</dbReference>
<dbReference type="NCBIfam" id="TIGR03692">
    <property type="entry name" value="ATP_dep_HslV"/>
    <property type="match status" value="1"/>
</dbReference>
<dbReference type="NCBIfam" id="NF003964">
    <property type="entry name" value="PRK05456.1"/>
    <property type="match status" value="1"/>
</dbReference>
<dbReference type="PANTHER" id="PTHR32194:SF0">
    <property type="entry name" value="ATP-DEPENDENT PROTEASE SUBUNIT HSLV"/>
    <property type="match status" value="1"/>
</dbReference>
<dbReference type="PANTHER" id="PTHR32194">
    <property type="entry name" value="METALLOPROTEASE TLDD"/>
    <property type="match status" value="1"/>
</dbReference>
<dbReference type="Pfam" id="PF00227">
    <property type="entry name" value="Proteasome"/>
    <property type="match status" value="1"/>
</dbReference>
<dbReference type="PIRSF" id="PIRSF039093">
    <property type="entry name" value="HslV"/>
    <property type="match status" value="1"/>
</dbReference>
<dbReference type="SUPFAM" id="SSF56235">
    <property type="entry name" value="N-terminal nucleophile aminohydrolases (Ntn hydrolases)"/>
    <property type="match status" value="1"/>
</dbReference>
<dbReference type="PROSITE" id="PS51476">
    <property type="entry name" value="PROTEASOME_BETA_2"/>
    <property type="match status" value="1"/>
</dbReference>
<proteinExistence type="inferred from homology"/>